<evidence type="ECO:0000256" key="1">
    <source>
        <dbReference type="SAM" id="MobiDB-lite"/>
    </source>
</evidence>
<proteinExistence type="predicted"/>
<accession>P26800</accession>
<sequence>MKATRRTRVASERGVRRRRRVRATRKAGELPVKVWARTLPSAAWDPVGSVRTQVTPSRAAPRTCQPPAWSSRRRGRPRSSRARSTEPAWSPEGVVRCAT</sequence>
<protein>
    <recommendedName>
        <fullName>Uncharacterized 11.4 kDa protein</fullName>
    </recommendedName>
    <alternativeName>
        <fullName>ORF1</fullName>
    </alternativeName>
</protein>
<dbReference type="EMBL" id="X64391">
    <property type="protein sequence ID" value="CAA45730.1"/>
    <property type="molecule type" value="Genomic_DNA"/>
</dbReference>
<dbReference type="PIR" id="S22957">
    <property type="entry name" value="S22957"/>
</dbReference>
<name>Y11K_STRFR</name>
<organism>
    <name type="scientific">Streptomyces fradiae</name>
    <name type="common">Streptomyces roseoflavus</name>
    <dbReference type="NCBI Taxonomy" id="1906"/>
    <lineage>
        <taxon>Bacteria</taxon>
        <taxon>Bacillati</taxon>
        <taxon>Actinomycetota</taxon>
        <taxon>Actinomycetes</taxon>
        <taxon>Kitasatosporales</taxon>
        <taxon>Streptomycetaceae</taxon>
        <taxon>Streptomyces</taxon>
    </lineage>
</organism>
<feature type="chain" id="PRO_0000066063" description="Uncharacterized 11.4 kDa protein">
    <location>
        <begin position="1"/>
        <end position="99"/>
    </location>
</feature>
<feature type="region of interest" description="Disordered" evidence="1">
    <location>
        <begin position="1"/>
        <end position="24"/>
    </location>
</feature>
<feature type="region of interest" description="Disordered" evidence="1">
    <location>
        <begin position="49"/>
        <end position="99"/>
    </location>
</feature>
<feature type="compositionally biased region" description="Basic residues" evidence="1">
    <location>
        <begin position="15"/>
        <end position="24"/>
    </location>
</feature>
<feature type="compositionally biased region" description="Basic residues" evidence="1">
    <location>
        <begin position="71"/>
        <end position="81"/>
    </location>
</feature>
<reference key="1">
    <citation type="journal article" date="1992" name="Nucleic Acids Res.">
        <title>Heterologous activation of the actinorhodin biosynthetic pathway in Streptomyces lividans.</title>
        <authorList>
            <person name="Romero N.M."/>
            <person name="Parro V."/>
            <person name="Malpartida F."/>
            <person name="Mellado R.P."/>
        </authorList>
    </citation>
    <scope>NUCLEOTIDE SEQUENCE [GENOMIC DNA]</scope>
    <source>
        <strain>ATCC 14544 / DSM 40758 / IMRU 3739 / NCIMB 11726 / NRRL B-2841</strain>
    </source>
</reference>